<proteinExistence type="inferred from homology"/>
<evidence type="ECO:0000255" key="1">
    <source>
        <dbReference type="HAMAP-Rule" id="MF_00532"/>
    </source>
</evidence>
<evidence type="ECO:0000305" key="2"/>
<gene>
    <name evidence="1" type="primary">rpsI</name>
    <name type="ordered locus">RBAM_001750</name>
</gene>
<protein>
    <recommendedName>
        <fullName evidence="1">Small ribosomal subunit protein uS9</fullName>
    </recommendedName>
    <alternativeName>
        <fullName evidence="2">30S ribosomal protein S9</fullName>
    </alternativeName>
</protein>
<sequence length="130" mass="14304">MAQVQYYGTGRRKSSVARVRLVPGEGRIVVNNREISEHIPSPALIEDIKQPLTLTETAGTYDVLVNVHGGGLSGQAGAIRHGIARALLEADPEYRATLKRAGLLTRDARMKERKKYGLKGARRAPQFSKR</sequence>
<feature type="chain" id="PRO_1000051160" description="Small ribosomal subunit protein uS9">
    <location>
        <begin position="1"/>
        <end position="130"/>
    </location>
</feature>
<reference key="1">
    <citation type="journal article" date="2007" name="Nat. Biotechnol.">
        <title>Comparative analysis of the complete genome sequence of the plant growth-promoting bacterium Bacillus amyloliquefaciens FZB42.</title>
        <authorList>
            <person name="Chen X.H."/>
            <person name="Koumoutsi A."/>
            <person name="Scholz R."/>
            <person name="Eisenreich A."/>
            <person name="Schneider K."/>
            <person name="Heinemeyer I."/>
            <person name="Morgenstern B."/>
            <person name="Voss B."/>
            <person name="Hess W.R."/>
            <person name="Reva O."/>
            <person name="Junge H."/>
            <person name="Voigt B."/>
            <person name="Jungblut P.R."/>
            <person name="Vater J."/>
            <person name="Suessmuth R."/>
            <person name="Liesegang H."/>
            <person name="Strittmatter A."/>
            <person name="Gottschalk G."/>
            <person name="Borriss R."/>
        </authorList>
    </citation>
    <scope>NUCLEOTIDE SEQUENCE [LARGE SCALE GENOMIC DNA]</scope>
    <source>
        <strain>DSM 23117 / BGSC 10A6 / LMG 26770 / FZB42</strain>
    </source>
</reference>
<comment type="similarity">
    <text evidence="1">Belongs to the universal ribosomal protein uS9 family.</text>
</comment>
<name>RS9_BACVZ</name>
<organism>
    <name type="scientific">Bacillus velezensis (strain DSM 23117 / BGSC 10A6 / LMG 26770 / FZB42)</name>
    <name type="common">Bacillus amyloliquefaciens subsp. plantarum</name>
    <dbReference type="NCBI Taxonomy" id="326423"/>
    <lineage>
        <taxon>Bacteria</taxon>
        <taxon>Bacillati</taxon>
        <taxon>Bacillota</taxon>
        <taxon>Bacilli</taxon>
        <taxon>Bacillales</taxon>
        <taxon>Bacillaceae</taxon>
        <taxon>Bacillus</taxon>
        <taxon>Bacillus amyloliquefaciens group</taxon>
    </lineage>
</organism>
<accession>A7Z0S2</accession>
<dbReference type="EMBL" id="CP000560">
    <property type="protein sequence ID" value="ABS72598.1"/>
    <property type="molecule type" value="Genomic_DNA"/>
</dbReference>
<dbReference type="RefSeq" id="WP_003225846.1">
    <property type="nucleotide sequence ID" value="NC_009725.2"/>
</dbReference>
<dbReference type="SMR" id="A7Z0S2"/>
<dbReference type="GeneID" id="93079314"/>
<dbReference type="KEGG" id="bay:RBAM_001750"/>
<dbReference type="HOGENOM" id="CLU_046483_2_1_9"/>
<dbReference type="Proteomes" id="UP000001120">
    <property type="component" value="Chromosome"/>
</dbReference>
<dbReference type="GO" id="GO:0022627">
    <property type="term" value="C:cytosolic small ribosomal subunit"/>
    <property type="evidence" value="ECO:0007669"/>
    <property type="project" value="TreeGrafter"/>
</dbReference>
<dbReference type="GO" id="GO:0003723">
    <property type="term" value="F:RNA binding"/>
    <property type="evidence" value="ECO:0007669"/>
    <property type="project" value="TreeGrafter"/>
</dbReference>
<dbReference type="GO" id="GO:0003735">
    <property type="term" value="F:structural constituent of ribosome"/>
    <property type="evidence" value="ECO:0007669"/>
    <property type="project" value="InterPro"/>
</dbReference>
<dbReference type="GO" id="GO:0006412">
    <property type="term" value="P:translation"/>
    <property type="evidence" value="ECO:0007669"/>
    <property type="project" value="UniProtKB-UniRule"/>
</dbReference>
<dbReference type="FunFam" id="3.30.230.10:FF:000001">
    <property type="entry name" value="30S ribosomal protein S9"/>
    <property type="match status" value="1"/>
</dbReference>
<dbReference type="Gene3D" id="3.30.230.10">
    <property type="match status" value="1"/>
</dbReference>
<dbReference type="HAMAP" id="MF_00532_B">
    <property type="entry name" value="Ribosomal_uS9_B"/>
    <property type="match status" value="1"/>
</dbReference>
<dbReference type="InterPro" id="IPR020568">
    <property type="entry name" value="Ribosomal_Su5_D2-typ_SF"/>
</dbReference>
<dbReference type="InterPro" id="IPR000754">
    <property type="entry name" value="Ribosomal_uS9"/>
</dbReference>
<dbReference type="InterPro" id="IPR023035">
    <property type="entry name" value="Ribosomal_uS9_bac/plastid"/>
</dbReference>
<dbReference type="InterPro" id="IPR020574">
    <property type="entry name" value="Ribosomal_uS9_CS"/>
</dbReference>
<dbReference type="InterPro" id="IPR014721">
    <property type="entry name" value="Ribsml_uS5_D2-typ_fold_subgr"/>
</dbReference>
<dbReference type="NCBIfam" id="NF001099">
    <property type="entry name" value="PRK00132.1"/>
    <property type="match status" value="1"/>
</dbReference>
<dbReference type="PANTHER" id="PTHR21569">
    <property type="entry name" value="RIBOSOMAL PROTEIN S9"/>
    <property type="match status" value="1"/>
</dbReference>
<dbReference type="PANTHER" id="PTHR21569:SF1">
    <property type="entry name" value="SMALL RIBOSOMAL SUBUNIT PROTEIN US9M"/>
    <property type="match status" value="1"/>
</dbReference>
<dbReference type="Pfam" id="PF00380">
    <property type="entry name" value="Ribosomal_S9"/>
    <property type="match status" value="1"/>
</dbReference>
<dbReference type="SUPFAM" id="SSF54211">
    <property type="entry name" value="Ribosomal protein S5 domain 2-like"/>
    <property type="match status" value="1"/>
</dbReference>
<dbReference type="PROSITE" id="PS00360">
    <property type="entry name" value="RIBOSOMAL_S9"/>
    <property type="match status" value="1"/>
</dbReference>
<keyword id="KW-0687">Ribonucleoprotein</keyword>
<keyword id="KW-0689">Ribosomal protein</keyword>